<sequence length="155" mass="17952">MIELGVSLCPFFLAALFEIRGGYLICLWLRNNMRAVFGPLGRLMLAVCGIIPTFQPSHFGRVYAAHGGIFIVFSLIWDLFVDKKIPDRYDHRGNNNVCGCFHYVLRLSLIGRYSVISFCNFQTPRQRISDFFLSRSIKHNFYLFFCNQTLGNYFV</sequence>
<organism>
    <name type="scientific">Methanosarcina acetivorans (strain ATCC 35395 / DSM 2834 / JCM 12185 / C2A)</name>
    <dbReference type="NCBI Taxonomy" id="188937"/>
    <lineage>
        <taxon>Archaea</taxon>
        <taxon>Methanobacteriati</taxon>
        <taxon>Methanobacteriota</taxon>
        <taxon>Stenosarchaea group</taxon>
        <taxon>Methanomicrobia</taxon>
        <taxon>Methanosarcinales</taxon>
        <taxon>Methanosarcinaceae</taxon>
        <taxon>Methanosarcina</taxon>
    </lineage>
</organism>
<name>Y3936_METAC</name>
<feature type="chain" id="PRO_0000162358" description="UPF0060 membrane protein MA_3936">
    <location>
        <begin position="1"/>
        <end position="155"/>
    </location>
</feature>
<feature type="transmembrane region" description="Helical" evidence="2">
    <location>
        <begin position="8"/>
        <end position="28"/>
    </location>
</feature>
<feature type="transmembrane region" description="Helical" evidence="2">
    <location>
        <begin position="35"/>
        <end position="55"/>
    </location>
</feature>
<feature type="transmembrane region" description="Helical" evidence="2">
    <location>
        <begin position="62"/>
        <end position="82"/>
    </location>
</feature>
<keyword id="KW-1003">Cell membrane</keyword>
<keyword id="KW-0472">Membrane</keyword>
<keyword id="KW-1185">Reference proteome</keyword>
<keyword id="KW-0812">Transmembrane</keyword>
<keyword id="KW-1133">Transmembrane helix</keyword>
<protein>
    <recommendedName>
        <fullName>UPF0060 membrane protein MA_3936</fullName>
    </recommendedName>
</protein>
<proteinExistence type="inferred from homology"/>
<accession>Q8TJ52</accession>
<dbReference type="EMBL" id="AE010299">
    <property type="protein sequence ID" value="AAM07287.1"/>
    <property type="molecule type" value="Genomic_DNA"/>
</dbReference>
<dbReference type="RefSeq" id="WP_011023832.1">
    <property type="nucleotide sequence ID" value="NC_003552.1"/>
</dbReference>
<dbReference type="TCDB" id="2.A.7.26.2">
    <property type="family name" value="the drug/metabolite transporter (dmt) superfamily"/>
</dbReference>
<dbReference type="EnsemblBacteria" id="AAM07287">
    <property type="protein sequence ID" value="AAM07287"/>
    <property type="gene ID" value="MA_3936"/>
</dbReference>
<dbReference type="GeneID" id="90384382"/>
<dbReference type="KEGG" id="mac:MA_3936"/>
<dbReference type="HOGENOM" id="CLU_1691530_0_0_2"/>
<dbReference type="InParanoid" id="Q8TJ52"/>
<dbReference type="PhylomeDB" id="Q8TJ52"/>
<dbReference type="Proteomes" id="UP000002487">
    <property type="component" value="Chromosome"/>
</dbReference>
<dbReference type="GO" id="GO:0005886">
    <property type="term" value="C:plasma membrane"/>
    <property type="evidence" value="ECO:0000318"/>
    <property type="project" value="GO_Central"/>
</dbReference>
<dbReference type="InterPro" id="IPR003844">
    <property type="entry name" value="UPF0060"/>
</dbReference>
<dbReference type="PANTHER" id="PTHR36116">
    <property type="entry name" value="UPF0060 MEMBRANE PROTEIN YNFA"/>
    <property type="match status" value="1"/>
</dbReference>
<dbReference type="PANTHER" id="PTHR36116:SF1">
    <property type="entry name" value="UPF0060 MEMBRANE PROTEIN YNFA"/>
    <property type="match status" value="1"/>
</dbReference>
<dbReference type="Pfam" id="PF02694">
    <property type="entry name" value="UPF0060"/>
    <property type="match status" value="1"/>
</dbReference>
<gene>
    <name type="ordered locus">MA_3936</name>
</gene>
<comment type="subcellular location">
    <subcellularLocation>
        <location evidence="1">Cell membrane</location>
        <topology evidence="1">Multi-pass membrane protein</topology>
    </subcellularLocation>
</comment>
<comment type="similarity">
    <text evidence="3">Belongs to the UPF0060 family.</text>
</comment>
<evidence type="ECO:0000250" key="1"/>
<evidence type="ECO:0000255" key="2"/>
<evidence type="ECO:0000305" key="3"/>
<reference key="1">
    <citation type="journal article" date="2002" name="Genome Res.">
        <title>The genome of Methanosarcina acetivorans reveals extensive metabolic and physiological diversity.</title>
        <authorList>
            <person name="Galagan J.E."/>
            <person name="Nusbaum C."/>
            <person name="Roy A."/>
            <person name="Endrizzi M.G."/>
            <person name="Macdonald P."/>
            <person name="FitzHugh W."/>
            <person name="Calvo S."/>
            <person name="Engels R."/>
            <person name="Smirnov S."/>
            <person name="Atnoor D."/>
            <person name="Brown A."/>
            <person name="Allen N."/>
            <person name="Naylor J."/>
            <person name="Stange-Thomann N."/>
            <person name="DeArellano K."/>
            <person name="Johnson R."/>
            <person name="Linton L."/>
            <person name="McEwan P."/>
            <person name="McKernan K."/>
            <person name="Talamas J."/>
            <person name="Tirrell A."/>
            <person name="Ye W."/>
            <person name="Zimmer A."/>
            <person name="Barber R.D."/>
            <person name="Cann I."/>
            <person name="Graham D.E."/>
            <person name="Grahame D.A."/>
            <person name="Guss A.M."/>
            <person name="Hedderich R."/>
            <person name="Ingram-Smith C."/>
            <person name="Kuettner H.C."/>
            <person name="Krzycki J.A."/>
            <person name="Leigh J.A."/>
            <person name="Li W."/>
            <person name="Liu J."/>
            <person name="Mukhopadhyay B."/>
            <person name="Reeve J.N."/>
            <person name="Smith K."/>
            <person name="Springer T.A."/>
            <person name="Umayam L.A."/>
            <person name="White O."/>
            <person name="White R.H."/>
            <person name="de Macario E.C."/>
            <person name="Ferry J.G."/>
            <person name="Jarrell K.F."/>
            <person name="Jing H."/>
            <person name="Macario A.J.L."/>
            <person name="Paulsen I.T."/>
            <person name="Pritchett M."/>
            <person name="Sowers K.R."/>
            <person name="Swanson R.V."/>
            <person name="Zinder S.H."/>
            <person name="Lander E."/>
            <person name="Metcalf W.W."/>
            <person name="Birren B."/>
        </authorList>
    </citation>
    <scope>NUCLEOTIDE SEQUENCE [LARGE SCALE GENOMIC DNA]</scope>
    <source>
        <strain>ATCC 35395 / DSM 2834 / JCM 12185 / C2A</strain>
    </source>
</reference>